<reference key="1">
    <citation type="journal article" date="2004" name="Genome Res.">
        <title>The status, quality, and expansion of the NIH full-length cDNA project: the Mammalian Gene Collection (MGC).</title>
        <authorList>
            <consortium name="The MGC Project Team"/>
        </authorList>
    </citation>
    <scope>NUCLEOTIDE SEQUENCE [LARGE SCALE MRNA]</scope>
    <source>
        <tissue>Lung</tissue>
    </source>
</reference>
<proteinExistence type="evidence at transcript level"/>
<dbReference type="EC" id="1.-.-.-"/>
<dbReference type="EMBL" id="BC158771">
    <property type="protein sequence ID" value="AAI58772.1"/>
    <property type="molecule type" value="mRNA"/>
</dbReference>
<dbReference type="RefSeq" id="NP_001388369.1">
    <property type="nucleotide sequence ID" value="NM_001401440.1"/>
</dbReference>
<dbReference type="RefSeq" id="XP_006250102.1">
    <property type="nucleotide sequence ID" value="XM_006250040.3"/>
</dbReference>
<dbReference type="SMR" id="B0BNC9"/>
<dbReference type="FunCoup" id="B0BNC9">
    <property type="interactions" value="223"/>
</dbReference>
<dbReference type="STRING" id="10116.ENSRNOP00000006924"/>
<dbReference type="PhosphoSitePlus" id="B0BNC9"/>
<dbReference type="PaxDb" id="10116-ENSRNOP00000006924"/>
<dbReference type="PeptideAtlas" id="B0BNC9"/>
<dbReference type="Ensembl" id="ENSRNOT00000006924.8">
    <property type="protein sequence ID" value="ENSRNOP00000006924.4"/>
    <property type="gene ID" value="ENSRNOG00000005177.9"/>
</dbReference>
<dbReference type="GeneID" id="289138"/>
<dbReference type="UCSC" id="RGD:1304982">
    <property type="organism name" value="rat"/>
</dbReference>
<dbReference type="AGR" id="RGD:1304982"/>
<dbReference type="RGD" id="1304982">
    <property type="gene designation" value="RGD1304982"/>
</dbReference>
<dbReference type="eggNOG" id="KOG1198">
    <property type="taxonomic scope" value="Eukaryota"/>
</dbReference>
<dbReference type="GeneTree" id="ENSGT00940000162916"/>
<dbReference type="HOGENOM" id="CLU_026673_3_1_1"/>
<dbReference type="InParanoid" id="B0BNC9"/>
<dbReference type="OMA" id="CDIRGVF"/>
<dbReference type="PhylomeDB" id="B0BNC9"/>
<dbReference type="TreeFam" id="TF314255"/>
<dbReference type="PRO" id="PR:B0BNC9"/>
<dbReference type="Proteomes" id="UP000002494">
    <property type="component" value="Chromosome 13"/>
</dbReference>
<dbReference type="Bgee" id="ENSRNOG00000005177">
    <property type="expression patterns" value="Expressed in adult mammalian kidney and 18 other cell types or tissues"/>
</dbReference>
<dbReference type="ExpressionAtlas" id="B0BNC9">
    <property type="expression patterns" value="baseline and differential"/>
</dbReference>
<dbReference type="GO" id="GO:0016491">
    <property type="term" value="F:oxidoreductase activity"/>
    <property type="evidence" value="ECO:0000318"/>
    <property type="project" value="GO_Central"/>
</dbReference>
<dbReference type="CDD" id="cd08241">
    <property type="entry name" value="QOR1"/>
    <property type="match status" value="1"/>
</dbReference>
<dbReference type="Gene3D" id="3.90.180.10">
    <property type="entry name" value="Medium-chain alcohol dehydrogenases, catalytic domain"/>
    <property type="match status" value="1"/>
</dbReference>
<dbReference type="Gene3D" id="3.40.50.720">
    <property type="entry name" value="NAD(P)-binding Rossmann-like Domain"/>
    <property type="match status" value="1"/>
</dbReference>
<dbReference type="InterPro" id="IPR013149">
    <property type="entry name" value="ADH-like_C"/>
</dbReference>
<dbReference type="InterPro" id="IPR013154">
    <property type="entry name" value="ADH-like_N"/>
</dbReference>
<dbReference type="InterPro" id="IPR011032">
    <property type="entry name" value="GroES-like_sf"/>
</dbReference>
<dbReference type="InterPro" id="IPR036291">
    <property type="entry name" value="NAD(P)-bd_dom_sf"/>
</dbReference>
<dbReference type="InterPro" id="IPR020843">
    <property type="entry name" value="PKS_ER"/>
</dbReference>
<dbReference type="InterPro" id="IPR051397">
    <property type="entry name" value="Zn-ADH-like_protein"/>
</dbReference>
<dbReference type="PANTHER" id="PTHR43677:SF4">
    <property type="entry name" value="QUINONE OXIDOREDUCTASE-LIKE PROTEIN 2"/>
    <property type="match status" value="1"/>
</dbReference>
<dbReference type="PANTHER" id="PTHR43677">
    <property type="entry name" value="SHORT-CHAIN DEHYDROGENASE/REDUCTASE"/>
    <property type="match status" value="1"/>
</dbReference>
<dbReference type="Pfam" id="PF08240">
    <property type="entry name" value="ADH_N"/>
    <property type="match status" value="1"/>
</dbReference>
<dbReference type="Pfam" id="PF00107">
    <property type="entry name" value="ADH_zinc_N"/>
    <property type="match status" value="1"/>
</dbReference>
<dbReference type="SMART" id="SM00829">
    <property type="entry name" value="PKS_ER"/>
    <property type="match status" value="1"/>
</dbReference>
<dbReference type="SUPFAM" id="SSF50129">
    <property type="entry name" value="GroES-like"/>
    <property type="match status" value="1"/>
</dbReference>
<dbReference type="SUPFAM" id="SSF51735">
    <property type="entry name" value="NAD(P)-binding Rossmann-fold domains"/>
    <property type="match status" value="1"/>
</dbReference>
<protein>
    <recommendedName>
        <fullName>Quinone oxidoreductase-like protein 2</fullName>
        <ecNumber>1.-.-.-</ecNumber>
    </recommendedName>
</protein>
<feature type="chain" id="PRO_0000341240" description="Quinone oxidoreductase-like protein 2">
    <location>
        <begin position="1"/>
        <end position="350"/>
    </location>
</feature>
<feature type="modified residue" description="N6-acetyllysine" evidence="1">
    <location>
        <position position="36"/>
    </location>
</feature>
<feature type="modified residue" description="N6-succinyllysine" evidence="1">
    <location>
        <position position="201"/>
    </location>
</feature>
<feature type="modified residue" description="N6-acetyllysine" evidence="1">
    <location>
        <position position="302"/>
    </location>
</feature>
<feature type="modified residue" description="N6-acetyllysine" evidence="1">
    <location>
        <position position="328"/>
    </location>
</feature>
<name>QORL2_RAT</name>
<comment type="similarity">
    <text evidence="2">Belongs to the zinc-containing alcohol dehydrogenase family. Quinone oxidoreductase subfamily.</text>
</comment>
<keyword id="KW-0007">Acetylation</keyword>
<keyword id="KW-0560">Oxidoreductase</keyword>
<keyword id="KW-1185">Reference proteome</keyword>
<organism>
    <name type="scientific">Rattus norvegicus</name>
    <name type="common">Rat</name>
    <dbReference type="NCBI Taxonomy" id="10116"/>
    <lineage>
        <taxon>Eukaryota</taxon>
        <taxon>Metazoa</taxon>
        <taxon>Chordata</taxon>
        <taxon>Craniata</taxon>
        <taxon>Vertebrata</taxon>
        <taxon>Euteleostomi</taxon>
        <taxon>Mammalia</taxon>
        <taxon>Eutheria</taxon>
        <taxon>Euarchontoglires</taxon>
        <taxon>Glires</taxon>
        <taxon>Rodentia</taxon>
        <taxon>Myomorpha</taxon>
        <taxon>Muroidea</taxon>
        <taxon>Muridae</taxon>
        <taxon>Murinae</taxon>
        <taxon>Rattus</taxon>
    </lineage>
</organism>
<sequence>MAARLCARCLPPAWLCRQAGQGQSRHYRAAVCTELKQPLTIQEVAPRPIGPQEVRVDVHFCGINFADNLVCRGQYQEKPPLPFTPGMEFSGVVLEAGADVSTVKKGDRVIGVSNFHSMAEQCITDQKTLWRIPENVSLQDAAVLPVSYGTAILAVDHRARIQPGETVLVTAAAGATGLAVIDVATNVFCAKVIAAAGSDEKCKLAMQRGAQSGVNYSQGSLKDAVKKLVGSSGVNVAIDMVGGDVFLDSLRSLAWEGRIVVLGFAGGNIASVPSNLLLLKNISAMGLYWGRYQHQDFAVFSKSMSTALQYCQQGLIHPHTGAVFKLEKVNDAFLHVMQRKSTGKVLLSLK</sequence>
<evidence type="ECO:0000250" key="1">
    <source>
        <dbReference type="UniProtKB" id="Q3UNZ8"/>
    </source>
</evidence>
<evidence type="ECO:0000305" key="2"/>
<accession>B0BNC9</accession>